<sequence>MGLTSQLLPPLFFLLACAGNFVHGHKCDITLQEIIKTLNSLTEQKTLCTKLTITDILAASKNTTEKETFCRAATVLRQFYSHHEKDTRCLGATAQQFHRHKQLIRFLKRLDRNLWGLAGLNSCPVKEANQSTLENFLERLKTIMREKYSKCSS</sequence>
<dbReference type="EMBL" id="AB000515">
    <property type="protein sequence ID" value="BAA19133.1"/>
    <property type="molecule type" value="mRNA"/>
</dbReference>
<dbReference type="EMBL" id="AY130262">
    <property type="protein sequence ID" value="AAN06596.1"/>
    <property type="molecule type" value="mRNA"/>
</dbReference>
<dbReference type="BMRB" id="P79339"/>
<dbReference type="SMR" id="P79339"/>
<dbReference type="STRING" id="9541.ENSMFAP00000032728"/>
<dbReference type="GlyCosmos" id="P79339">
    <property type="glycosylation" value="1 site, No reported glycans"/>
</dbReference>
<dbReference type="Proteomes" id="UP000233100">
    <property type="component" value="Unplaced"/>
</dbReference>
<dbReference type="GO" id="GO:0005615">
    <property type="term" value="C:extracellular space"/>
    <property type="evidence" value="ECO:0000250"/>
    <property type="project" value="UniProtKB"/>
</dbReference>
<dbReference type="GO" id="GO:0005125">
    <property type="term" value="F:cytokine activity"/>
    <property type="evidence" value="ECO:0007669"/>
    <property type="project" value="UniProtKB-KW"/>
</dbReference>
<dbReference type="GO" id="GO:0008083">
    <property type="term" value="F:growth factor activity"/>
    <property type="evidence" value="ECO:0007669"/>
    <property type="project" value="UniProtKB-KW"/>
</dbReference>
<dbReference type="GO" id="GO:0005136">
    <property type="term" value="F:interleukin-4 receptor binding"/>
    <property type="evidence" value="ECO:0007669"/>
    <property type="project" value="InterPro"/>
</dbReference>
<dbReference type="GO" id="GO:0042113">
    <property type="term" value="P:B cell activation"/>
    <property type="evidence" value="ECO:0007669"/>
    <property type="project" value="UniProtKB-KW"/>
</dbReference>
<dbReference type="GO" id="GO:0006955">
    <property type="term" value="P:immune response"/>
    <property type="evidence" value="ECO:0007669"/>
    <property type="project" value="InterPro"/>
</dbReference>
<dbReference type="GO" id="GO:0035771">
    <property type="term" value="P:interleukin-4-mediated signaling pathway"/>
    <property type="evidence" value="ECO:0007669"/>
    <property type="project" value="TreeGrafter"/>
</dbReference>
<dbReference type="GO" id="GO:0043066">
    <property type="term" value="P:negative regulation of apoptotic process"/>
    <property type="evidence" value="ECO:0000250"/>
    <property type="project" value="UniProtKB"/>
</dbReference>
<dbReference type="GO" id="GO:0050728">
    <property type="term" value="P:negative regulation of inflammatory response"/>
    <property type="evidence" value="ECO:0007669"/>
    <property type="project" value="TreeGrafter"/>
</dbReference>
<dbReference type="GO" id="GO:0045671">
    <property type="term" value="P:negative regulation of osteoclast differentiation"/>
    <property type="evidence" value="ECO:0000250"/>
    <property type="project" value="UniProtKB"/>
</dbReference>
<dbReference type="GO" id="GO:0030890">
    <property type="term" value="P:positive regulation of B cell proliferation"/>
    <property type="evidence" value="ECO:0000250"/>
    <property type="project" value="UniProtKB"/>
</dbReference>
<dbReference type="GO" id="GO:0048295">
    <property type="term" value="P:positive regulation of isotype switching to IgE isotypes"/>
    <property type="evidence" value="ECO:0000250"/>
    <property type="project" value="UniProtKB"/>
</dbReference>
<dbReference type="GO" id="GO:0048304">
    <property type="term" value="P:positive regulation of isotype switching to IgG isotypes"/>
    <property type="evidence" value="ECO:0000250"/>
    <property type="project" value="UniProtKB"/>
</dbReference>
<dbReference type="GO" id="GO:0016239">
    <property type="term" value="P:positive regulation of macroautophagy"/>
    <property type="evidence" value="ECO:0000250"/>
    <property type="project" value="UniProtKB"/>
</dbReference>
<dbReference type="GO" id="GO:0045348">
    <property type="term" value="P:positive regulation of MHC class II biosynthetic process"/>
    <property type="evidence" value="ECO:0000250"/>
    <property type="project" value="UniProtKB"/>
</dbReference>
<dbReference type="GO" id="GO:0042102">
    <property type="term" value="P:positive regulation of T cell proliferation"/>
    <property type="evidence" value="ECO:0000250"/>
    <property type="project" value="UniProtKB"/>
</dbReference>
<dbReference type="GO" id="GO:0045944">
    <property type="term" value="P:positive regulation of transcription by RNA polymerase II"/>
    <property type="evidence" value="ECO:0000250"/>
    <property type="project" value="UniProtKB"/>
</dbReference>
<dbReference type="GO" id="GO:0050776">
    <property type="term" value="P:regulation of immune response"/>
    <property type="evidence" value="ECO:0000250"/>
    <property type="project" value="UniProtKB"/>
</dbReference>
<dbReference type="FunFam" id="1.20.1250.10:FF:000014">
    <property type="entry name" value="Interleukin-4"/>
    <property type="match status" value="1"/>
</dbReference>
<dbReference type="Gene3D" id="1.20.1250.10">
    <property type="match status" value="1"/>
</dbReference>
<dbReference type="InterPro" id="IPR009079">
    <property type="entry name" value="4_helix_cytokine-like_core"/>
</dbReference>
<dbReference type="InterPro" id="IPR002354">
    <property type="entry name" value="IL-4"/>
</dbReference>
<dbReference type="InterPro" id="IPR001325">
    <property type="entry name" value="IL-4/IL-13"/>
</dbReference>
<dbReference type="InterPro" id="IPR018096">
    <property type="entry name" value="IL-4/IL-13_CS"/>
</dbReference>
<dbReference type="PANTHER" id="PTHR47401">
    <property type="entry name" value="INTERLEUKIN-4"/>
    <property type="match status" value="1"/>
</dbReference>
<dbReference type="PANTHER" id="PTHR47401:SF1">
    <property type="entry name" value="INTERLEUKIN-4"/>
    <property type="match status" value="1"/>
</dbReference>
<dbReference type="Pfam" id="PF00727">
    <property type="entry name" value="IL4"/>
    <property type="match status" value="1"/>
</dbReference>
<dbReference type="PIRSF" id="PIRSF001941">
    <property type="entry name" value="Interleukin_4"/>
    <property type="match status" value="1"/>
</dbReference>
<dbReference type="PRINTS" id="PR00431">
    <property type="entry name" value="INTERLEUKIN4"/>
</dbReference>
<dbReference type="SMART" id="SM00190">
    <property type="entry name" value="IL4_13"/>
    <property type="match status" value="1"/>
</dbReference>
<dbReference type="SUPFAM" id="SSF47266">
    <property type="entry name" value="4-helical cytokines"/>
    <property type="match status" value="1"/>
</dbReference>
<dbReference type="PROSITE" id="PS00838">
    <property type="entry name" value="INTERLEUKIN_4_13"/>
    <property type="match status" value="1"/>
</dbReference>
<name>IL4_MACFA</name>
<reference key="1">
    <citation type="submission" date="1997-02" db="EMBL/GenBank/DDBJ databases">
        <title>Molecular cloning and expression of cynomolgus monkey IL-4.</title>
        <authorList>
            <person name="Tatsumi M."/>
        </authorList>
    </citation>
    <scope>NUCLEOTIDE SEQUENCE [MRNA] (ISOFORM 1)</scope>
</reference>
<reference key="2">
    <citation type="journal article" date="2002" name="Immunogenetics">
        <title>Cloning of interleukin-4 delta2 splice variant (IL-4delta2) in chimpanzee and cynomolgus macaque: phylogenetic analysis of delta2 splice variant appearance, and implications for the study of IL-4-driven immune processes.</title>
        <authorList>
            <person name="Gautherot I."/>
            <person name="Burdin N."/>
            <person name="Seguin D."/>
            <person name="Aujame L."/>
            <person name="Sodoyer R."/>
        </authorList>
    </citation>
    <scope>NUCLEOTIDE SEQUENCE [MRNA] (ISOFORM 2)</scope>
</reference>
<accession>P79339</accession>
<accession>Q6YL20</accession>
<gene>
    <name type="primary">IL4</name>
</gene>
<evidence type="ECO:0000250" key="1"/>
<evidence type="ECO:0000250" key="2">
    <source>
        <dbReference type="UniProtKB" id="P07750"/>
    </source>
</evidence>
<evidence type="ECO:0000255" key="3"/>
<evidence type="ECO:0000303" key="4">
    <source>
    </source>
</evidence>
<evidence type="ECO:0000305" key="5"/>
<comment type="function">
    <text evidence="2">Participates in at least several B-cell activation processes as well as of other cell types. It is a costimulator of DNA-synthesis. It induces the expression of class II MHC molecules on resting B-cells. It enhances both secretion and cell surface expression of IgE and IgG1. It also regulates the expression of the low affinity Fc receptor for IgE (CD23) on both lymphocytes and monocytes. Positively regulates IL31RA expression in macrophages. Stimulates autophagy in dendritic cells by interfering with mTORC1 signaling and through the induction of RUFY4.</text>
</comment>
<comment type="subcellular location">
    <subcellularLocation>
        <location>Secreted</location>
    </subcellularLocation>
</comment>
<comment type="alternative products">
    <event type="alternative splicing"/>
    <isoform>
        <id>P79339-1</id>
        <name>1</name>
        <name>Long</name>
        <sequence type="displayed"/>
    </isoform>
    <isoform>
        <id>P79339-2</id>
        <name>2</name>
        <name>Short</name>
        <name>IL-4delta2</name>
        <sequence type="described" ref="VSP_013353"/>
    </isoform>
</comment>
<comment type="similarity">
    <text evidence="5">Belongs to the IL-4/IL-13 family.</text>
</comment>
<feature type="signal peptide" evidence="1">
    <location>
        <begin position="1"/>
        <end position="24"/>
    </location>
</feature>
<feature type="chain" id="PRO_0000015534" description="Interleukin-4">
    <location>
        <begin position="25"/>
        <end position="153"/>
    </location>
</feature>
<feature type="glycosylation site" description="N-linked (GlcNAc...) asparagine" evidence="3">
    <location>
        <position position="62"/>
    </location>
</feature>
<feature type="disulfide bond" evidence="3">
    <location>
        <begin position="27"/>
        <end position="151"/>
    </location>
</feature>
<feature type="disulfide bond" evidence="3">
    <location>
        <begin position="48"/>
        <end position="89"/>
    </location>
</feature>
<feature type="disulfide bond" evidence="3">
    <location>
        <begin position="70"/>
        <end position="123"/>
    </location>
</feature>
<feature type="splice variant" id="VSP_013353" description="In isoform 2." evidence="4">
    <location>
        <begin position="46"/>
        <end position="61"/>
    </location>
</feature>
<feature type="sequence conflict" description="In Ref. 1; BAA19133." evidence="5" ref="1">
    <original>V</original>
    <variation>A</variation>
    <location>
        <position position="22"/>
    </location>
</feature>
<feature type="sequence conflict" description="In Ref. 1; BAA19133." evidence="5" ref="1">
    <original>KCDITLQ</original>
    <variation>NCHIALR</variation>
    <location>
        <begin position="26"/>
        <end position="32"/>
    </location>
</feature>
<feature type="sequence conflict" description="In Ref. 1; BAA19133." evidence="5" ref="1">
    <original>K</original>
    <variation>E</variation>
    <location>
        <position position="36"/>
    </location>
</feature>
<feature type="sequence conflict" description="In Ref. 1; BAA19133." evidence="5" ref="1">
    <original>N</original>
    <variation>S</variation>
    <location>
        <position position="129"/>
    </location>
</feature>
<feature type="sequence conflict" description="In Ref. 1; BAA19133." evidence="5" ref="1">
    <original>N</original>
    <variation>D</variation>
    <location>
        <position position="135"/>
    </location>
</feature>
<feature type="sequence conflict" description="In Ref. 1; BAA19133." evidence="5" ref="1">
    <original>R</original>
    <variation>K</variation>
    <location>
        <position position="145"/>
    </location>
</feature>
<protein>
    <recommendedName>
        <fullName>Interleukin-4</fullName>
        <shortName>IL-4</shortName>
    </recommendedName>
    <alternativeName>
        <fullName>B-cell stimulatory factor 1</fullName>
        <shortName>BSF-1</shortName>
    </alternativeName>
    <alternativeName>
        <fullName>Lymphocyte stimulatory factor 1</fullName>
    </alternativeName>
</protein>
<keyword id="KW-0025">Alternative splicing</keyword>
<keyword id="KW-0075">B-cell activation</keyword>
<keyword id="KW-0202">Cytokine</keyword>
<keyword id="KW-1015">Disulfide bond</keyword>
<keyword id="KW-0325">Glycoprotein</keyword>
<keyword id="KW-0339">Growth factor</keyword>
<keyword id="KW-1185">Reference proteome</keyword>
<keyword id="KW-0964">Secreted</keyword>
<keyword id="KW-0732">Signal</keyword>
<proteinExistence type="evidence at transcript level"/>
<organism>
    <name type="scientific">Macaca fascicularis</name>
    <name type="common">Crab-eating macaque</name>
    <name type="synonym">Cynomolgus monkey</name>
    <dbReference type="NCBI Taxonomy" id="9541"/>
    <lineage>
        <taxon>Eukaryota</taxon>
        <taxon>Metazoa</taxon>
        <taxon>Chordata</taxon>
        <taxon>Craniata</taxon>
        <taxon>Vertebrata</taxon>
        <taxon>Euteleostomi</taxon>
        <taxon>Mammalia</taxon>
        <taxon>Eutheria</taxon>
        <taxon>Euarchontoglires</taxon>
        <taxon>Primates</taxon>
        <taxon>Haplorrhini</taxon>
        <taxon>Catarrhini</taxon>
        <taxon>Cercopithecidae</taxon>
        <taxon>Cercopithecinae</taxon>
        <taxon>Macaca</taxon>
    </lineage>
</organism>